<organism evidence="16">
    <name type="scientific">Nitratidesulfovibrio vulgaris (strain ATCC 29579 / DSM 644 / CCUG 34227 / NCIMB 8303 / VKM B-1760 / Hildenborough)</name>
    <name type="common">Desulfovibrio vulgaris</name>
    <dbReference type="NCBI Taxonomy" id="882"/>
    <lineage>
        <taxon>Bacteria</taxon>
        <taxon>Pseudomonadati</taxon>
        <taxon>Thermodesulfobacteriota</taxon>
        <taxon>Desulfovibrionia</taxon>
        <taxon>Desulfovibrionales</taxon>
        <taxon>Desulfovibrionaceae</taxon>
        <taxon>Nitratidesulfovibrio</taxon>
    </lineage>
</organism>
<protein>
    <recommendedName>
        <fullName evidence="10 11">Cytochrome c nitrite reductase subunit NrfA</fullName>
        <shortName evidence="11">cNiR subunit NrfA</shortName>
        <ecNumber evidence="1 2 5 6 8">1.7.2.2</ecNumber>
    </recommendedName>
    <alternativeName>
        <fullName evidence="14">Cytochrome c-type protein NrfA</fullName>
    </alternativeName>
</protein>
<sequence length="524" mass="60003">MNNQKTFKGLRLAALGLVAVAAFTAGCSDVSTELKTPVYKTKLTAEEIRNSAFKPEFPKQYASYERNDETTVMTEYKGSVPFNKNDNVNPLPEGYRHAQPYLKNLWLGYPFMYEYREARGHTYAIQDFLHIDRINRYAEKGGLPATCWNCKTPKMMEWVKESGDGFWAKDVNEFRDKIDMKDHTIGCATCHDPQTMELRITSVPLTDYLVSQGKDPKKLPRNEMRALVCGQCHVEYYFNGPTMGVNKKPVFPWAEGFDPADMYRYYDKHGDLQVKGFEGKFADWTHPASKTPMIKAQHPEYETWINGTHGAAGVTCADCHMSYTRSDDKKKISSHWWTSPMKDPEMRACRQCHSDKTPDYLKSRVLFTQKRTFDLLLAAQEVSVKAHEAVRLANEYQGAKAAGYDDLMIQAREMVRKGQFFWDYVSAENSVGFHNPAKALDTLAQSQQFSQKAIDLAMEATQYGIGKDLSGDIKTIVPPILKMNRKLQQDPEFMKTHKWFQYLPVLPKADQVWDGQKRLVSAKQ</sequence>
<keyword id="KW-0002">3D-structure</keyword>
<keyword id="KW-0106">Calcium</keyword>
<keyword id="KW-0997">Cell inner membrane</keyword>
<keyword id="KW-1003">Cell membrane</keyword>
<keyword id="KW-0349">Heme</keyword>
<keyword id="KW-0408">Iron</keyword>
<keyword id="KW-0472">Membrane</keyword>
<keyword id="KW-0479">Metal-binding</keyword>
<keyword id="KW-0560">Oxidoreductase</keyword>
<keyword id="KW-1185">Reference proteome</keyword>
<keyword id="KW-0732">Signal</keyword>
<keyword id="KW-0346">Stress response</keyword>
<reference evidence="16 18" key="1">
    <citation type="journal article" date="2004" name="Nat. Biotechnol.">
        <title>The genome sequence of the anaerobic, sulfate-reducing bacterium Desulfovibrio vulgaris Hildenborough.</title>
        <authorList>
            <person name="Heidelberg J.F."/>
            <person name="Seshadri R."/>
            <person name="Haveman S.A."/>
            <person name="Hemme C.L."/>
            <person name="Paulsen I.T."/>
            <person name="Kolonay J.F."/>
            <person name="Eisen J.A."/>
            <person name="Ward N.L."/>
            <person name="Methe B.A."/>
            <person name="Brinkac L.M."/>
            <person name="Daugherty S.C."/>
            <person name="DeBoy R.T."/>
            <person name="Dodson R.J."/>
            <person name="Durkin A.S."/>
            <person name="Madupu R."/>
            <person name="Nelson W.C."/>
            <person name="Sullivan S.A."/>
            <person name="Fouts D.E."/>
            <person name="Haft D.H."/>
            <person name="Selengut J."/>
            <person name="Peterson J.D."/>
            <person name="Davidsen T.M."/>
            <person name="Zafar N."/>
            <person name="Zhou L."/>
            <person name="Radune D."/>
            <person name="Dimitrov G."/>
            <person name="Hance M."/>
            <person name="Tran K."/>
            <person name="Khouri H.M."/>
            <person name="Gill J."/>
            <person name="Utterback T.R."/>
            <person name="Feldblyum T.V."/>
            <person name="Wall J.D."/>
            <person name="Voordouw G."/>
            <person name="Fraser C.M."/>
        </authorList>
    </citation>
    <scope>NUCLEOTIDE SEQUENCE [LARGE SCALE GENOMIC DNA]</scope>
    <source>
        <strain evidence="18">ATCC 29579 / DSM 644 / CCUG 34227 / NCIMB 8303 / VKM B-1760 / Hildenborough</strain>
    </source>
</reference>
<reference evidence="17" key="2">
    <citation type="journal article" date="2004" name="FEMS Microbiol. Ecol.">
        <title>Detection and widespread distribution of the nrfA gene encoding nitrite reduction to ammonia, a short circuit in the biological nitrogen cycle that competes with denitrification.</title>
        <authorList>
            <person name="Mohan S.B."/>
            <person name="Schmid M."/>
            <person name="Jetten M."/>
            <person name="Cole J."/>
        </authorList>
    </citation>
    <scope>NUCLEOTIDE SEQUENCE [GENOMIC DNA] OF 155-321</scope>
</reference>
<reference key="3">
    <citation type="journal article" date="2000" name="Biochim. Biophys. Acta">
        <title>Characterization of a heme c nitrite reductase from a non-ammonifying microorganism, Desulfovibrio vulgaris Hildenborough.</title>
        <authorList>
            <person name="Pereira I.A."/>
            <person name="LeGall J."/>
            <person name="Xavier A.V."/>
            <person name="Teixeira M."/>
        </authorList>
    </citation>
    <scope>FUNCTION</scope>
    <scope>CATALYTIC ACTIVITY</scope>
    <scope>BIOPHYSICOCHEMICAL PROPERTIES</scope>
    <scope>SUBCELLULAR LOCATION</scope>
    <source>
        <strain evidence="9">ATCC 29579 / DSM 644 / CCUG 34227 / NCIMB 8303 / VKM B-1760 / Hildenborough</strain>
    </source>
</reference>
<reference key="4">
    <citation type="journal article" date="2004" name="J. Bacteriol.">
        <title>Physiological and gene expression analysis of inhibition of Desulfovibrio vulgaris hildenborough by nitrite.</title>
        <authorList>
            <person name="Haveman S.A."/>
            <person name="Greene E.A."/>
            <person name="Stilwell C.P."/>
            <person name="Voordouw J.K."/>
            <person name="Voordouw G."/>
        </authorList>
    </citation>
    <scope>FUNCTION</scope>
    <scope>INDUCTION</scope>
    <scope>DISRUPTION PHENOTYPE</scope>
</reference>
<reference key="5">
    <citation type="journal article" date="2006" name="Acta Crystallogr. F">
        <title>Crystallization and preliminary structure determination of the membrane-bound complex cytochrome c nitrite reductase from Desulfovibrio vulgaris Hildenborough.</title>
        <authorList>
            <person name="Rodrigues M.L."/>
            <person name="Oliveira T."/>
            <person name="Matias P.M."/>
            <person name="Martins I.C."/>
            <person name="Valente F.M."/>
            <person name="Pereira I.A."/>
            <person name="Archer M."/>
        </authorList>
    </citation>
    <scope>CRYSTALLIZATION</scope>
    <scope>SUBUNIT</scope>
    <scope>SUBCELLULAR LOCATION</scope>
    <source>
        <strain evidence="11">ATCC 29579 / DSM 644 / CCUG 34227 / NCIMB 8303 / VKM B-1760 / Hildenborough</strain>
    </source>
</reference>
<reference key="6">
    <citation type="journal article" date="2012" name="J. Phys. Chem. B">
        <title>Redox properties of lysine- and methionine-coordinated hemes ensure downhill electron transfer in NrfH2A4 nitrite reductase.</title>
        <authorList>
            <person name="Todorovic S."/>
            <person name="Rodrigues M.L."/>
            <person name="Matos D."/>
            <person name="Pereira I.A."/>
        </authorList>
    </citation>
    <scope>COFACTOR</scope>
    <scope>BIOPHYSICOCHEMICAL PROPERTIES</scope>
    <scope>EPR SPECTROSCOPY OF THE NRFHA COMPLEX</scope>
    <scope>SUBUNIT</scope>
    <scope>SUBCELLULAR LOCATION</scope>
</reference>
<reference key="7">
    <citation type="journal article" date="2015" name="Environ. Sci. Technol.">
        <title>Independence of nitrate and nitrite inhibition of Desulfovibrio vulgaris Hildenborough and use of nitrite as a substrate for growth.</title>
        <authorList>
            <person name="Korte H.L."/>
            <person name="Saini A."/>
            <person name="Trotter V.V."/>
            <person name="Butland G.P."/>
            <person name="Arkin A.P."/>
            <person name="Wall J.D."/>
        </authorList>
    </citation>
    <scope>FUNCTION</scope>
    <scope>CATALYTIC ACTIVITY</scope>
    <scope>DISRUPTION PHENOTYPE</scope>
    <source>
        <strain evidence="13">ATCC 29579 / DSM 644 / CCUG 34227 / NCIMB 8303 / VKM B-1760 / Hildenborough</strain>
    </source>
</reference>
<reference evidence="19" key="8">
    <citation type="journal article" date="2006" name="EMBO J.">
        <title>X-ray structure of the membrane-bound cytochrome c quinol dehydrogenase NrfH reveals novel haem coordination.</title>
        <authorList>
            <person name="Rodrigues M.L."/>
            <person name="Oliveira T.F."/>
            <person name="Pereira I.A."/>
            <person name="Archer M."/>
        </authorList>
    </citation>
    <scope>X-RAY CRYSTALLOGRAPHY (2.30 ANGSTROMS) OF 25-524 IN COMPLEX WITH CALCIUM; HEME AND NRFH</scope>
    <scope>FUNCTION</scope>
    <scope>CATALYTIC ACTIVITY</scope>
    <scope>COFACTOR</scope>
    <scope>SUBUNIT</scope>
    <scope>SUBCELLULAR LOCATION</scope>
    <source>
        <strain evidence="12">ATCC 29579 / DSM 644 / CCUG 34227 / NCIMB 8303 / VKM B-1760 / Hildenborough</strain>
    </source>
</reference>
<reference evidence="20" key="9">
    <citation type="journal article" date="2008" name="J. Mol. Biol.">
        <title>Quinol oxidation by c-type cytochromes: structural characterization of the menaquinol binding site of NrfHA.</title>
        <authorList>
            <person name="Rodrigues M.L."/>
            <person name="Scott K.A."/>
            <person name="Sansom M.S."/>
            <person name="Pereira I.A."/>
            <person name="Archer M."/>
        </authorList>
    </citation>
    <scope>X-RAY CRYSTALLOGRAPHY (2.80 ANGSTROMS) IN COMPLEX WITH CALCIUM; HEME AND NRFH</scope>
    <scope>FUNCTION</scope>
    <scope>CATALYTIC ACTIVITY</scope>
    <scope>COFACTOR</scope>
    <scope>SUBUNIT</scope>
    <scope>SUBCELLULAR LOCATION</scope>
</reference>
<dbReference type="EC" id="1.7.2.2" evidence="1 2 5 6 8"/>
<dbReference type="EMBL" id="AE017285">
    <property type="protein sequence ID" value="AAS95106.1"/>
    <property type="molecule type" value="Genomic_DNA"/>
</dbReference>
<dbReference type="EMBL" id="AJ697975">
    <property type="protein sequence ID" value="CAG27083.1"/>
    <property type="molecule type" value="Genomic_DNA"/>
</dbReference>
<dbReference type="RefSeq" id="WP_010937928.1">
    <property type="nucleotide sequence ID" value="NC_002937.3"/>
</dbReference>
<dbReference type="RefSeq" id="YP_009847.1">
    <property type="nucleotide sequence ID" value="NC_002937.3"/>
</dbReference>
<dbReference type="PDB" id="2J7A">
    <property type="method" value="X-ray"/>
    <property type="resolution" value="2.30 A"/>
    <property type="chains" value="A/B/D/E/G/H/J/K/M/N/P/Q=25-524"/>
</dbReference>
<dbReference type="PDB" id="2VR0">
    <property type="method" value="X-ray"/>
    <property type="resolution" value="2.80 A"/>
    <property type="chains" value="A/B/D/E=1-524"/>
</dbReference>
<dbReference type="PDBsum" id="2J7A"/>
<dbReference type="PDBsum" id="2VR0"/>
<dbReference type="SMR" id="Q72EF3"/>
<dbReference type="STRING" id="882.DVU_0625"/>
<dbReference type="DrugBank" id="DB07918">
    <property type="generic name" value="2-heptyl-4-hydroxyquinoline N-oxide"/>
</dbReference>
<dbReference type="PaxDb" id="882-DVU_0625"/>
<dbReference type="EnsemblBacteria" id="AAS95106">
    <property type="protein sequence ID" value="AAS95106"/>
    <property type="gene ID" value="DVU_0625"/>
</dbReference>
<dbReference type="KEGG" id="dvu:DVU_0625"/>
<dbReference type="PATRIC" id="fig|882.5.peg.583"/>
<dbReference type="eggNOG" id="COG3303">
    <property type="taxonomic scope" value="Bacteria"/>
</dbReference>
<dbReference type="HOGENOM" id="CLU_035040_1_0_7"/>
<dbReference type="OrthoDB" id="9780421at2"/>
<dbReference type="PhylomeDB" id="Q72EF3"/>
<dbReference type="BRENDA" id="1.7.7.1">
    <property type="organism ID" value="1914"/>
</dbReference>
<dbReference type="EvolutionaryTrace" id="Q72EF3"/>
<dbReference type="Proteomes" id="UP000002194">
    <property type="component" value="Chromosome"/>
</dbReference>
<dbReference type="GO" id="GO:0030288">
    <property type="term" value="C:outer membrane-bounded periplasmic space"/>
    <property type="evidence" value="ECO:0007669"/>
    <property type="project" value="TreeGrafter"/>
</dbReference>
<dbReference type="GO" id="GO:0005886">
    <property type="term" value="C:plasma membrane"/>
    <property type="evidence" value="ECO:0007669"/>
    <property type="project" value="UniProtKB-SubCell"/>
</dbReference>
<dbReference type="GO" id="GO:0020037">
    <property type="term" value="F:heme binding"/>
    <property type="evidence" value="ECO:0007669"/>
    <property type="project" value="TreeGrafter"/>
</dbReference>
<dbReference type="GO" id="GO:0046872">
    <property type="term" value="F:metal ion binding"/>
    <property type="evidence" value="ECO:0007669"/>
    <property type="project" value="UniProtKB-KW"/>
</dbReference>
<dbReference type="GO" id="GO:0042279">
    <property type="term" value="F:nitrite reductase (cytochrome, ammonia-forming) activity"/>
    <property type="evidence" value="ECO:0007669"/>
    <property type="project" value="UniProtKB-EC"/>
</dbReference>
<dbReference type="GO" id="GO:0019645">
    <property type="term" value="P:anaerobic electron transport chain"/>
    <property type="evidence" value="ECO:0007669"/>
    <property type="project" value="TreeGrafter"/>
</dbReference>
<dbReference type="CDD" id="cd00548">
    <property type="entry name" value="NrfA-like"/>
    <property type="match status" value="1"/>
</dbReference>
<dbReference type="Gene3D" id="1.20.140.10">
    <property type="entry name" value="Butyryl-CoA Dehydrogenase, subunit A, domain 3"/>
    <property type="match status" value="1"/>
</dbReference>
<dbReference type="Gene3D" id="1.10.1130.10">
    <property type="entry name" value="Flavocytochrome C3, Chain A"/>
    <property type="match status" value="1"/>
</dbReference>
<dbReference type="InterPro" id="IPR003321">
    <property type="entry name" value="Cyt_c552"/>
</dbReference>
<dbReference type="InterPro" id="IPR036280">
    <property type="entry name" value="Multihaem_cyt_sf"/>
</dbReference>
<dbReference type="PANTHER" id="PTHR30633:SF0">
    <property type="entry name" value="CYTOCHROME C-552"/>
    <property type="match status" value="1"/>
</dbReference>
<dbReference type="PANTHER" id="PTHR30633">
    <property type="entry name" value="CYTOCHROME C-552 RESPIRATORY NITRITE REDUCTASE"/>
    <property type="match status" value="1"/>
</dbReference>
<dbReference type="Pfam" id="PF02335">
    <property type="entry name" value="Cytochrom_C552"/>
    <property type="match status" value="1"/>
</dbReference>
<dbReference type="PIRSF" id="PIRSF000243">
    <property type="entry name" value="Cyt_c552"/>
    <property type="match status" value="1"/>
</dbReference>
<dbReference type="SUPFAM" id="SSF48695">
    <property type="entry name" value="Multiheme cytochromes"/>
    <property type="match status" value="1"/>
</dbReference>
<dbReference type="PROSITE" id="PS51008">
    <property type="entry name" value="MULTIHEME_CYTC"/>
    <property type="match status" value="1"/>
</dbReference>
<gene>
    <name evidence="10 17" type="primary">nrfA</name>
    <name evidence="16" type="ordered locus">DVU_0625</name>
</gene>
<proteinExistence type="evidence at protein level"/>
<name>NRFA_NITV2</name>
<comment type="function">
    <text evidence="2 3 5 6 8 14">Catalytic subunit of the cytochrome c nitrite reductase holocomplex NrfHA (PubMed:11004582, PubMed:17139260, PubMed:18597779, PubMed:25534748). Has both nitrite and sulfite reductase activities (PubMed:11004582). Catalyzes the reduction of nitrite to ammonia, consuming six electrons acquired by the electron donor subunit NrfH from the menaquinone pool, in an anaerobic respiratory process of nitrite (PubMed:11004582, PubMed:17139260, PubMed:18597779, PubMed:25534748). The other biological function of the NrfHA holocomplex is to detoxify nitrite (PubMed:15547266, PubMed:25534748). This function is essential for the survival of this organism as it enables it to overcome inhibition by nitrite, which is produced by other organisms living in the same environment (Probable).</text>
</comment>
<comment type="catalytic activity">
    <reaction evidence="1 2 5 6 8">
        <text>6 Fe(III)-[cytochrome c] + NH4(+) + 2 H2O = 6 Fe(II)-[cytochrome c] + nitrite + 8 H(+)</text>
        <dbReference type="Rhea" id="RHEA:13089"/>
        <dbReference type="Rhea" id="RHEA-COMP:10350"/>
        <dbReference type="Rhea" id="RHEA-COMP:14399"/>
        <dbReference type="ChEBI" id="CHEBI:15377"/>
        <dbReference type="ChEBI" id="CHEBI:15378"/>
        <dbReference type="ChEBI" id="CHEBI:16301"/>
        <dbReference type="ChEBI" id="CHEBI:28938"/>
        <dbReference type="ChEBI" id="CHEBI:29033"/>
        <dbReference type="ChEBI" id="CHEBI:29034"/>
        <dbReference type="EC" id="1.7.2.2"/>
    </reaction>
</comment>
<comment type="cofactor">
    <cofactor evidence="1 5 6">
        <name>Ca(2+)</name>
        <dbReference type="ChEBI" id="CHEBI:29108"/>
    </cofactor>
</comment>
<comment type="cofactor">
    <cofactor evidence="1 5 6 7">
        <name>heme</name>
        <dbReference type="ChEBI" id="CHEBI:30413"/>
    </cofactor>
    <text evidence="5 6 7">Binds 5 heme groups per subunit (PubMed:17139260, PubMed:18597779). The catalytic lysine-coordinated high spin heme 1 redox potential value indicates that a driving force for a downhill electron transfer is ensured in the NrfH2A4 complex (PubMed:22519292).</text>
</comment>
<comment type="biophysicochemical properties">
    <kinetics>
        <Vmax evidence="2">685.0 umol/min/mg enzyme for the nitrite reductase activity</Vmax>
        <Vmax evidence="2">1.0 umol/min/mg enzyme for the sulfite reductase activity</Vmax>
    </kinetics>
    <redoxPotential>
        <text evidence="7">E(0) is -50 mV for the lysine-coordinated heme 1.</text>
    </redoxPotential>
</comment>
<comment type="subunit">
    <text evidence="4 5 6 7">Component of the NrfHA cytochrome c nitrite reductase complex composed of 4 NrfA catalytic subunits and 2 NrfH quinone-binding subunits (PubMed:17139260, PubMed:18597779, PubMed:22519292). NrfA homodimer interacts with NrfH (PubMed:16754983, PubMed:17139260).</text>
</comment>
<comment type="subcellular location">
    <subcellularLocation>
        <location evidence="2 4 5 6 7">Cell inner membrane</location>
        <topology evidence="4 5 6">Peripheral membrane protein</topology>
        <orientation evidence="4 5 6">Periplasmic side</orientation>
    </subcellularLocation>
</comment>
<comment type="induction">
    <text evidence="3">Expression is induced in response to nitrite stress. Not induced by nitrate.</text>
</comment>
<comment type="disruption phenotype">
    <text evidence="3 8">Sensitive to nitrite, but not to nitrate (PubMed:15547266). Loss of anaerobical respiration of nitrite, but the mutant is still able to utilize nitrite as a nitrogen source for growth (PubMed:25534748).</text>
</comment>
<comment type="similarity">
    <text evidence="14">Belongs to the cytochrome c-552 family.</text>
</comment>
<accession>Q72EF3</accession>
<accession>Q6ZXS8</accession>
<feature type="signal peptide" evidence="15">
    <location>
        <begin position="1"/>
        <end position="24"/>
    </location>
</feature>
<feature type="chain" id="PRO_5004285214" description="Cytochrome c nitrite reductase subunit NrfA" evidence="15">
    <location>
        <begin position="25"/>
        <end position="524"/>
    </location>
</feature>
<feature type="region of interest" description="Interaction with NrfH" evidence="5 19">
    <location>
        <begin position="29"/>
        <end position="39"/>
    </location>
</feature>
<feature type="region of interest" description="Interaction with NrfH" evidence="5 19">
    <location>
        <begin position="221"/>
        <end position="222"/>
    </location>
</feature>
<feature type="region of interest" description="Interaction with NrfH" evidence="5 19">
    <location>
        <begin position="318"/>
        <end position="331"/>
    </location>
</feature>
<feature type="region of interest" description="Interaction with NrfH" evidence="5 19">
    <location>
        <begin position="351"/>
        <end position="355"/>
    </location>
</feature>
<feature type="binding site" evidence="5 6 19 20">
    <location>
        <position position="78"/>
    </location>
    <ligand>
        <name>Ca(2+)</name>
        <dbReference type="ChEBI" id="CHEBI:29108"/>
        <label>1</label>
    </ligand>
</feature>
<feature type="binding site" evidence="5 6 19 20">
    <location>
        <position position="117"/>
    </location>
    <ligand>
        <name>Ca(2+)</name>
        <dbReference type="ChEBI" id="CHEBI:29108"/>
        <label>1</label>
    </ligand>
</feature>
<feature type="binding site" evidence="5 6 19 20">
    <location>
        <position position="118"/>
    </location>
    <ligand>
        <name>Ca(2+)</name>
        <dbReference type="ChEBI" id="CHEBI:29108"/>
        <label>1</label>
    </ligand>
</feature>
<feature type="binding site" description="axial binding residue" evidence="5 6 19 20">
    <location>
        <position position="121"/>
    </location>
    <ligand>
        <name>heme</name>
        <dbReference type="ChEBI" id="CHEBI:30413"/>
        <label>3</label>
    </ligand>
    <ligandPart>
        <name>Fe</name>
        <dbReference type="ChEBI" id="CHEBI:18248"/>
    </ligandPart>
</feature>
<feature type="binding site" description="covalent" evidence="5 19">
    <location>
        <position position="147"/>
    </location>
    <ligand>
        <name>heme</name>
        <dbReference type="ChEBI" id="CHEBI:30413"/>
        <label>1</label>
    </ligand>
</feature>
<feature type="binding site" description="covalent" evidence="5 6 19 20">
    <location>
        <position position="150"/>
    </location>
    <ligand>
        <name>heme</name>
        <dbReference type="ChEBI" id="CHEBI:30413"/>
        <label>1</label>
    </ligand>
</feature>
<feature type="binding site" description="axial binding residue" evidence="5 6 19 20">
    <location>
        <position position="151"/>
    </location>
    <ligand>
        <name>heme</name>
        <dbReference type="ChEBI" id="CHEBI:30413"/>
        <label>1</label>
    </ligand>
    <ligandPart>
        <name>Fe</name>
        <dbReference type="ChEBI" id="CHEBI:18248"/>
    </ligandPart>
</feature>
<feature type="binding site" description="covalent" evidence="5 19">
    <location>
        <position position="187"/>
    </location>
    <ligand>
        <name>heme</name>
        <dbReference type="ChEBI" id="CHEBI:30413"/>
        <label>2</label>
    </ligand>
</feature>
<feature type="binding site" description="covalent" evidence="6 20">
    <location>
        <position position="190"/>
    </location>
    <ligand>
        <name>heme</name>
        <dbReference type="ChEBI" id="CHEBI:30413"/>
        <label>2</label>
    </ligand>
</feature>
<feature type="binding site" description="axial binding residue" evidence="5 6 19 20">
    <location>
        <position position="191"/>
    </location>
    <ligand>
        <name>heme</name>
        <dbReference type="ChEBI" id="CHEBI:30413"/>
        <label>2</label>
    </ligand>
    <ligandPart>
        <name>Fe</name>
        <dbReference type="ChEBI" id="CHEBI:18248"/>
    </ligandPart>
</feature>
<feature type="binding site" description="covalent" evidence="5 6 19 20">
    <location>
        <position position="229"/>
    </location>
    <ligand>
        <name>heme</name>
        <dbReference type="ChEBI" id="CHEBI:30413"/>
        <label>3</label>
    </ligand>
</feature>
<feature type="binding site" description="covalent" evidence="5 19">
    <location>
        <position position="232"/>
    </location>
    <ligand>
        <name>heme</name>
        <dbReference type="ChEBI" id="CHEBI:30413"/>
        <label>3</label>
    </ligand>
</feature>
<feature type="binding site" description="axial binding residue" evidence="5 6 19 20">
    <location>
        <position position="233"/>
    </location>
    <ligand>
        <name>heme</name>
        <dbReference type="ChEBI" id="CHEBI:30413"/>
        <label>3</label>
    </ligand>
    <ligandPart>
        <name>Fe</name>
        <dbReference type="ChEBI" id="CHEBI:18248"/>
    </ligandPart>
</feature>
<feature type="binding site" evidence="5 6 19 20">
    <location>
        <position position="235"/>
    </location>
    <ligand>
        <name>Ca(2+)</name>
        <dbReference type="ChEBI" id="CHEBI:29108"/>
        <label>2</label>
    </ligand>
</feature>
<feature type="binding site" evidence="5 6 19 20">
    <location>
        <position position="236"/>
    </location>
    <ligand>
        <name>Ca(2+)</name>
        <dbReference type="ChEBI" id="CHEBI:29108"/>
        <label>2</label>
    </ligand>
</feature>
<feature type="binding site" evidence="5 6 19 20">
    <location>
        <position position="295"/>
    </location>
    <ligand>
        <name>Ca(2+)</name>
        <dbReference type="ChEBI" id="CHEBI:29108"/>
        <label>2</label>
    </ligand>
</feature>
<feature type="binding site" evidence="5 6 19 20">
    <location>
        <position position="297"/>
    </location>
    <ligand>
        <name>Ca(2+)</name>
        <dbReference type="ChEBI" id="CHEBI:29108"/>
        <label>2</label>
    </ligand>
</feature>
<feature type="binding site" description="axial binding residue" evidence="5 6 19 20">
    <location>
        <position position="309"/>
    </location>
    <ligand>
        <name>heme</name>
        <dbReference type="ChEBI" id="CHEBI:30413"/>
        <label>5</label>
    </ligand>
    <ligandPart>
        <name>Fe</name>
        <dbReference type="ChEBI" id="CHEBI:18248"/>
    </ligandPart>
</feature>
<feature type="binding site" description="covalent" evidence="5 6 19 20">
    <location>
        <position position="316"/>
    </location>
    <ligand>
        <name>heme</name>
        <dbReference type="ChEBI" id="CHEBI:30413"/>
        <label>4</label>
    </ligand>
</feature>
<feature type="binding site" description="covalent" evidence="5 19">
    <location>
        <position position="319"/>
    </location>
    <ligand>
        <name>heme</name>
        <dbReference type="ChEBI" id="CHEBI:30413"/>
        <label>4</label>
    </ligand>
</feature>
<feature type="binding site" description="axial binding residue" evidence="5 6 19 20">
    <location>
        <position position="320"/>
    </location>
    <ligand>
        <name>heme</name>
        <dbReference type="ChEBI" id="CHEBI:30413"/>
        <label>4</label>
    </ligand>
    <ligandPart>
        <name>Fe</name>
        <dbReference type="ChEBI" id="CHEBI:18248"/>
    </ligandPart>
</feature>
<feature type="binding site" description="axial binding residue" evidence="5 6 19 20">
    <location>
        <position position="335"/>
    </location>
    <ligand>
        <name>heme</name>
        <dbReference type="ChEBI" id="CHEBI:30413"/>
        <label>2</label>
    </ligand>
    <ligandPart>
        <name>Fe</name>
        <dbReference type="ChEBI" id="CHEBI:18248"/>
    </ligandPart>
</feature>
<feature type="binding site" description="covalent" evidence="5 6 19 20">
    <location>
        <position position="349"/>
    </location>
    <ligand>
        <name>heme</name>
        <dbReference type="ChEBI" id="CHEBI:30413"/>
        <label>5</label>
    </ligand>
</feature>
<feature type="binding site" description="covalent" evidence="5 6 19 20">
    <location>
        <position position="352"/>
    </location>
    <ligand>
        <name>heme</name>
        <dbReference type="ChEBI" id="CHEBI:30413"/>
        <label>5</label>
    </ligand>
</feature>
<feature type="binding site" description="axial binding residue" evidence="5 6 19 20">
    <location>
        <position position="353"/>
    </location>
    <ligand>
        <name>heme</name>
        <dbReference type="ChEBI" id="CHEBI:30413"/>
        <label>5</label>
    </ligand>
    <ligandPart>
        <name>Fe</name>
        <dbReference type="ChEBI" id="CHEBI:18248"/>
    </ligandPart>
</feature>
<feature type="binding site" description="axial binding residue" evidence="5 6 19 20">
    <location>
        <position position="434"/>
    </location>
    <ligand>
        <name>heme</name>
        <dbReference type="ChEBI" id="CHEBI:30413"/>
        <label>4</label>
    </ligand>
    <ligandPart>
        <name>Fe</name>
        <dbReference type="ChEBI" id="CHEBI:18248"/>
    </ligandPart>
</feature>
<feature type="site" description="Interaction with NrfH" evidence="5 19">
    <location>
        <position position="59"/>
    </location>
</feature>
<feature type="sequence conflict" description="In Ref. 2; CAG27083." evidence="14" ref="2">
    <original>VK</original>
    <variation>FP</variation>
    <location>
        <begin position="159"/>
        <end position="160"/>
    </location>
</feature>
<feature type="helix" evidence="21">
    <location>
        <begin position="50"/>
        <end position="52"/>
    </location>
</feature>
<feature type="turn" evidence="21">
    <location>
        <begin position="53"/>
        <end position="56"/>
    </location>
</feature>
<feature type="helix" evidence="21">
    <location>
        <begin position="58"/>
        <end position="65"/>
    </location>
</feature>
<feature type="helix" evidence="21">
    <location>
        <begin position="66"/>
        <end position="68"/>
    </location>
</feature>
<feature type="strand" evidence="21">
    <location>
        <begin position="87"/>
        <end position="89"/>
    </location>
</feature>
<feature type="turn" evidence="21">
    <location>
        <begin position="91"/>
        <end position="93"/>
    </location>
</feature>
<feature type="helix" evidence="21">
    <location>
        <begin position="102"/>
        <end position="105"/>
    </location>
</feature>
<feature type="turn" evidence="21">
    <location>
        <begin position="106"/>
        <end position="108"/>
    </location>
</feature>
<feature type="helix" evidence="21">
    <location>
        <begin position="110"/>
        <end position="112"/>
    </location>
</feature>
<feature type="helix" evidence="21">
    <location>
        <begin position="121"/>
        <end position="123"/>
    </location>
</feature>
<feature type="helix" evidence="21">
    <location>
        <begin position="124"/>
        <end position="128"/>
    </location>
</feature>
<feature type="strand" evidence="22">
    <location>
        <begin position="132"/>
        <end position="134"/>
    </location>
</feature>
<feature type="strand" evidence="21">
    <location>
        <begin position="137"/>
        <end position="140"/>
    </location>
</feature>
<feature type="strand" evidence="21">
    <location>
        <begin position="142"/>
        <end position="144"/>
    </location>
</feature>
<feature type="helix" evidence="21">
    <location>
        <begin position="145"/>
        <end position="148"/>
    </location>
</feature>
<feature type="turn" evidence="21">
    <location>
        <begin position="149"/>
        <end position="151"/>
    </location>
</feature>
<feature type="helix" evidence="21">
    <location>
        <begin position="155"/>
        <end position="162"/>
    </location>
</feature>
<feature type="helix" evidence="21">
    <location>
        <begin position="163"/>
        <end position="165"/>
    </location>
</feature>
<feature type="helix" evidence="21">
    <location>
        <begin position="171"/>
        <end position="174"/>
    </location>
</feature>
<feature type="turn" evidence="21">
    <location>
        <begin position="180"/>
        <end position="182"/>
    </location>
</feature>
<feature type="strand" evidence="21">
    <location>
        <begin position="183"/>
        <end position="185"/>
    </location>
</feature>
<feature type="helix" evidence="21">
    <location>
        <begin position="187"/>
        <end position="190"/>
    </location>
</feature>
<feature type="turn" evidence="21">
    <location>
        <begin position="193"/>
        <end position="195"/>
    </location>
</feature>
<feature type="helix" evidence="21">
    <location>
        <begin position="203"/>
        <end position="210"/>
    </location>
</feature>
<feature type="turn" evidence="21">
    <location>
        <begin position="211"/>
        <end position="213"/>
    </location>
</feature>
<feature type="helix" evidence="21">
    <location>
        <begin position="221"/>
        <end position="230"/>
    </location>
</feature>
<feature type="strand" evidence="21">
    <location>
        <begin position="243"/>
        <end position="245"/>
    </location>
</feature>
<feature type="helix" evidence="21">
    <location>
        <begin position="259"/>
        <end position="268"/>
    </location>
</feature>
<feature type="strand" evidence="21">
    <location>
        <begin position="283"/>
        <end position="285"/>
    </location>
</feature>
<feature type="turn" evidence="21">
    <location>
        <begin position="287"/>
        <end position="289"/>
    </location>
</feature>
<feature type="helix" evidence="21">
    <location>
        <begin position="300"/>
        <end position="304"/>
    </location>
</feature>
<feature type="turn" evidence="21">
    <location>
        <begin position="308"/>
        <end position="313"/>
    </location>
</feature>
<feature type="helix" evidence="21">
    <location>
        <begin position="316"/>
        <end position="320"/>
    </location>
</feature>
<feature type="strand" evidence="21">
    <location>
        <begin position="323"/>
        <end position="327"/>
    </location>
</feature>
<feature type="strand" evidence="21">
    <location>
        <begin position="330"/>
        <end position="333"/>
    </location>
</feature>
<feature type="helix" evidence="21">
    <location>
        <begin position="340"/>
        <end position="342"/>
    </location>
</feature>
<feature type="turn" evidence="21">
    <location>
        <begin position="347"/>
        <end position="355"/>
    </location>
</feature>
<feature type="helix" evidence="21">
    <location>
        <begin position="358"/>
        <end position="394"/>
    </location>
</feature>
<feature type="helix" evidence="21">
    <location>
        <begin position="404"/>
        <end position="426"/>
    </location>
</feature>
<feature type="turn" evidence="21">
    <location>
        <begin position="429"/>
        <end position="432"/>
    </location>
</feature>
<feature type="helix" evidence="21">
    <location>
        <begin position="436"/>
        <end position="459"/>
    </location>
</feature>
<feature type="turn" evidence="21">
    <location>
        <begin position="460"/>
        <end position="465"/>
    </location>
</feature>
<feature type="helix" evidence="21">
    <location>
        <begin position="466"/>
        <end position="469"/>
    </location>
</feature>
<feature type="helix" evidence="21">
    <location>
        <begin position="473"/>
        <end position="476"/>
    </location>
</feature>
<feature type="helix" evidence="21">
    <location>
        <begin position="487"/>
        <end position="489"/>
    </location>
</feature>
<feature type="helix" evidence="21">
    <location>
        <begin position="493"/>
        <end position="495"/>
    </location>
</feature>
<feature type="helix" evidence="21">
    <location>
        <begin position="498"/>
        <end position="502"/>
    </location>
</feature>
<evidence type="ECO:0000255" key="1"/>
<evidence type="ECO:0000269" key="2">
    <source>
    </source>
</evidence>
<evidence type="ECO:0000269" key="3">
    <source>
    </source>
</evidence>
<evidence type="ECO:0000269" key="4">
    <source>
    </source>
</evidence>
<evidence type="ECO:0000269" key="5">
    <source>
    </source>
</evidence>
<evidence type="ECO:0000269" key="6">
    <source>
    </source>
</evidence>
<evidence type="ECO:0000269" key="7">
    <source>
    </source>
</evidence>
<evidence type="ECO:0000269" key="8">
    <source>
    </source>
</evidence>
<evidence type="ECO:0000303" key="9">
    <source>
    </source>
</evidence>
<evidence type="ECO:0000303" key="10">
    <source>
    </source>
</evidence>
<evidence type="ECO:0000303" key="11">
    <source>
    </source>
</evidence>
<evidence type="ECO:0000303" key="12">
    <source>
    </source>
</evidence>
<evidence type="ECO:0000303" key="13">
    <source>
    </source>
</evidence>
<evidence type="ECO:0000305" key="14"/>
<evidence type="ECO:0000305" key="15">
    <source>
    </source>
</evidence>
<evidence type="ECO:0000312" key="16">
    <source>
        <dbReference type="EMBL" id="AAS95106.1"/>
    </source>
</evidence>
<evidence type="ECO:0000312" key="17">
    <source>
        <dbReference type="EMBL" id="CAG27083.1"/>
    </source>
</evidence>
<evidence type="ECO:0000312" key="18">
    <source>
        <dbReference type="Proteomes" id="UP000002194"/>
    </source>
</evidence>
<evidence type="ECO:0007744" key="19">
    <source>
        <dbReference type="PDB" id="2J7A"/>
    </source>
</evidence>
<evidence type="ECO:0007744" key="20">
    <source>
        <dbReference type="PDB" id="2VR0"/>
    </source>
</evidence>
<evidence type="ECO:0007829" key="21">
    <source>
        <dbReference type="PDB" id="2J7A"/>
    </source>
</evidence>
<evidence type="ECO:0007829" key="22">
    <source>
        <dbReference type="PDB" id="2VR0"/>
    </source>
</evidence>